<proteinExistence type="evidence at protein level"/>
<organism>
    <name type="scientific">Sphodromantis viridis</name>
    <name type="common">Giant African praying mantis</name>
    <dbReference type="NCBI Taxonomy" id="267111"/>
    <lineage>
        <taxon>Eukaryota</taxon>
        <taxon>Metazoa</taxon>
        <taxon>Ecdysozoa</taxon>
        <taxon>Arthropoda</taxon>
        <taxon>Hexapoda</taxon>
        <taxon>Insecta</taxon>
        <taxon>Pterygota</taxon>
        <taxon>Neoptera</taxon>
        <taxon>Polyneoptera</taxon>
        <taxon>Dictyoptera</taxon>
        <taxon>Mantodea</taxon>
        <taxon>Eumantodea</taxon>
        <taxon>Mantoidea</taxon>
        <taxon>Mantidae</taxon>
        <taxon>Tenoderinae</taxon>
        <taxon>Paramantini</taxon>
        <taxon>Sphodromantis</taxon>
    </lineage>
</organism>
<feature type="peptide" id="PRO_0000395596" description="Periviscerokinin-2" evidence="4">
    <location>
        <begin position="1"/>
        <end position="12"/>
    </location>
</feature>
<feature type="modified residue" description="Leucine amide" evidence="4">
    <location>
        <position position="12"/>
    </location>
</feature>
<feature type="unsure residue" description="L or I" evidence="4">
    <location>
        <position position="6"/>
    </location>
</feature>
<feature type="unsure residue" description="I or L" evidence="4">
    <location>
        <position position="7"/>
    </location>
</feature>
<feature type="unsure residue" description="L or I" evidence="4">
    <location>
        <position position="12"/>
    </location>
</feature>
<evidence type="ECO:0000250" key="1">
    <source>
        <dbReference type="UniProtKB" id="P83923"/>
    </source>
</evidence>
<evidence type="ECO:0000250" key="2">
    <source>
        <dbReference type="UniProtKB" id="P84375"/>
    </source>
</evidence>
<evidence type="ECO:0000255" key="3"/>
<evidence type="ECO:0000269" key="4">
    <source>
    </source>
</evidence>
<evidence type="ECO:0000303" key="5">
    <source>
    </source>
</evidence>
<evidence type="ECO:0000305" key="6"/>
<reference evidence="6" key="1">
    <citation type="journal article" date="2010" name="Peptides">
        <title>CAPA-peptides of praying mantids (Mantodea).</title>
        <authorList>
            <person name="Koehler R."/>
            <person name="Predel R."/>
        </authorList>
    </citation>
    <scope>PROTEIN SEQUENCE</scope>
    <scope>MASS SPECTROMETRY</scope>
    <scope>AMIDATION AT LEU-12</scope>
    <source>
        <tissue evidence="4">Abdominal perisympathetic organs</tissue>
    </source>
</reference>
<keyword id="KW-0027">Amidation</keyword>
<keyword id="KW-0903">Direct protein sequencing</keyword>
<keyword id="KW-0527">Neuropeptide</keyword>
<keyword id="KW-0964">Secreted</keyword>
<protein>
    <recommendedName>
        <fullName evidence="5">Periviscerokinin-2</fullName>
        <shortName evidence="5">Sphvi-PVK-2</shortName>
    </recommendedName>
</protein>
<name>PVK2_SPHVI</name>
<dbReference type="GO" id="GO:0005576">
    <property type="term" value="C:extracellular region"/>
    <property type="evidence" value="ECO:0007669"/>
    <property type="project" value="UniProtKB-SubCell"/>
</dbReference>
<dbReference type="GO" id="GO:0007218">
    <property type="term" value="P:neuropeptide signaling pathway"/>
    <property type="evidence" value="ECO:0007669"/>
    <property type="project" value="UniProtKB-KW"/>
</dbReference>
<dbReference type="InterPro" id="IPR013231">
    <property type="entry name" value="Periviscerokinin"/>
</dbReference>
<dbReference type="Pfam" id="PF08259">
    <property type="entry name" value="Periviscerokin"/>
    <property type="match status" value="1"/>
</dbReference>
<comment type="function">
    <text evidence="1">Mediates visceral muscle contractile activity (myotropic activity).</text>
</comment>
<comment type="subcellular location">
    <subcellularLocation>
        <location evidence="2">Secreted</location>
    </subcellularLocation>
</comment>
<comment type="mass spectrometry"/>
<comment type="miscellaneous">
    <text evidence="4">According to PubMed:19808072, a longer form of this peptide exists, which is much more abundant than the short form.</text>
</comment>
<comment type="similarity">
    <text evidence="3">Belongs to the periviscerokinin family.</text>
</comment>
<sequence>GGSSGLIAFPRL</sequence>
<accession>P86671</accession>